<proteinExistence type="inferred from homology"/>
<feature type="chain" id="PRO_0000167196" description="Small ribosomal subunit protein bS16">
    <location>
        <begin position="1"/>
        <end position="90"/>
    </location>
</feature>
<gene>
    <name evidence="1" type="primary">rpsP</name>
    <name type="ordered locus">LJ_1515</name>
</gene>
<protein>
    <recommendedName>
        <fullName evidence="1">Small ribosomal subunit protein bS16</fullName>
    </recommendedName>
    <alternativeName>
        <fullName evidence="2">30S ribosomal protein S16</fullName>
    </alternativeName>
</protein>
<organism>
    <name type="scientific">Lactobacillus johnsonii (strain CNCM I-12250 / La1 / NCC 533)</name>
    <dbReference type="NCBI Taxonomy" id="257314"/>
    <lineage>
        <taxon>Bacteria</taxon>
        <taxon>Bacillati</taxon>
        <taxon>Bacillota</taxon>
        <taxon>Bacilli</taxon>
        <taxon>Lactobacillales</taxon>
        <taxon>Lactobacillaceae</taxon>
        <taxon>Lactobacillus</taxon>
    </lineage>
</organism>
<name>RS16_LACJO</name>
<evidence type="ECO:0000255" key="1">
    <source>
        <dbReference type="HAMAP-Rule" id="MF_00385"/>
    </source>
</evidence>
<evidence type="ECO:0000305" key="2"/>
<accession>P62231</accession>
<sequence>MSVKIRMRRMGSKRKPFYRIVVADSRMPRDGRFIEEVGYYNPLTNPDEVKLEEDKIFEWLEKGAQPSDTVRSLLSKAGLMTRYHDAKYGK</sequence>
<comment type="similarity">
    <text evidence="1">Belongs to the bacterial ribosomal protein bS16 family.</text>
</comment>
<dbReference type="EMBL" id="AE017198">
    <property type="protein sequence ID" value="AAS09283.1"/>
    <property type="molecule type" value="Genomic_DNA"/>
</dbReference>
<dbReference type="RefSeq" id="WP_003647505.1">
    <property type="nucleotide sequence ID" value="NC_005362.1"/>
</dbReference>
<dbReference type="SMR" id="P62231"/>
<dbReference type="GeneID" id="83570158"/>
<dbReference type="KEGG" id="ljo:LJ_1515"/>
<dbReference type="eggNOG" id="COG0228">
    <property type="taxonomic scope" value="Bacteria"/>
</dbReference>
<dbReference type="HOGENOM" id="CLU_100590_5_0_9"/>
<dbReference type="Proteomes" id="UP000000581">
    <property type="component" value="Chromosome"/>
</dbReference>
<dbReference type="GO" id="GO:0005737">
    <property type="term" value="C:cytoplasm"/>
    <property type="evidence" value="ECO:0007669"/>
    <property type="project" value="UniProtKB-ARBA"/>
</dbReference>
<dbReference type="GO" id="GO:0015935">
    <property type="term" value="C:small ribosomal subunit"/>
    <property type="evidence" value="ECO:0007669"/>
    <property type="project" value="TreeGrafter"/>
</dbReference>
<dbReference type="GO" id="GO:0003735">
    <property type="term" value="F:structural constituent of ribosome"/>
    <property type="evidence" value="ECO:0007669"/>
    <property type="project" value="InterPro"/>
</dbReference>
<dbReference type="GO" id="GO:0006412">
    <property type="term" value="P:translation"/>
    <property type="evidence" value="ECO:0007669"/>
    <property type="project" value="UniProtKB-UniRule"/>
</dbReference>
<dbReference type="FunFam" id="3.30.1320.10:FF:000002">
    <property type="entry name" value="30S ribosomal protein S16"/>
    <property type="match status" value="1"/>
</dbReference>
<dbReference type="Gene3D" id="3.30.1320.10">
    <property type="match status" value="1"/>
</dbReference>
<dbReference type="HAMAP" id="MF_00385">
    <property type="entry name" value="Ribosomal_bS16"/>
    <property type="match status" value="1"/>
</dbReference>
<dbReference type="InterPro" id="IPR000307">
    <property type="entry name" value="Ribosomal_bS16"/>
</dbReference>
<dbReference type="InterPro" id="IPR023803">
    <property type="entry name" value="Ribosomal_bS16_dom_sf"/>
</dbReference>
<dbReference type="NCBIfam" id="TIGR00002">
    <property type="entry name" value="S16"/>
    <property type="match status" value="1"/>
</dbReference>
<dbReference type="PANTHER" id="PTHR12919">
    <property type="entry name" value="30S RIBOSOMAL PROTEIN S16"/>
    <property type="match status" value="1"/>
</dbReference>
<dbReference type="PANTHER" id="PTHR12919:SF20">
    <property type="entry name" value="SMALL RIBOSOMAL SUBUNIT PROTEIN BS16M"/>
    <property type="match status" value="1"/>
</dbReference>
<dbReference type="Pfam" id="PF00886">
    <property type="entry name" value="Ribosomal_S16"/>
    <property type="match status" value="1"/>
</dbReference>
<dbReference type="SUPFAM" id="SSF54565">
    <property type="entry name" value="Ribosomal protein S16"/>
    <property type="match status" value="1"/>
</dbReference>
<keyword id="KW-0687">Ribonucleoprotein</keyword>
<keyword id="KW-0689">Ribosomal protein</keyword>
<reference key="1">
    <citation type="journal article" date="2004" name="Proc. Natl. Acad. Sci. U.S.A.">
        <title>The genome sequence of the probiotic intestinal bacterium Lactobacillus johnsonii NCC 533.</title>
        <authorList>
            <person name="Pridmore R.D."/>
            <person name="Berger B."/>
            <person name="Desiere F."/>
            <person name="Vilanova D."/>
            <person name="Barretto C."/>
            <person name="Pittet A.-C."/>
            <person name="Zwahlen M.-C."/>
            <person name="Rouvet M."/>
            <person name="Altermann E."/>
            <person name="Barrangou R."/>
            <person name="Mollet B."/>
            <person name="Mercenier A."/>
            <person name="Klaenhammer T."/>
            <person name="Arigoni F."/>
            <person name="Schell M.A."/>
        </authorList>
    </citation>
    <scope>NUCLEOTIDE SEQUENCE [LARGE SCALE GENOMIC DNA]</scope>
    <source>
        <strain>CNCM I-1225 / La1 / NCC 533</strain>
    </source>
</reference>